<feature type="chain" id="PRO_1000012543" description="UPF0122 protein SPD_1143">
    <location>
        <begin position="1"/>
        <end position="110"/>
    </location>
</feature>
<organism>
    <name type="scientific">Streptococcus pneumoniae serotype 2 (strain D39 / NCTC 7466)</name>
    <dbReference type="NCBI Taxonomy" id="373153"/>
    <lineage>
        <taxon>Bacteria</taxon>
        <taxon>Bacillati</taxon>
        <taxon>Bacillota</taxon>
        <taxon>Bacilli</taxon>
        <taxon>Lactobacillales</taxon>
        <taxon>Streptococcaceae</taxon>
        <taxon>Streptococcus</taxon>
    </lineage>
</organism>
<name>Y1143_STRP2</name>
<keyword id="KW-1185">Reference proteome</keyword>
<comment type="function">
    <text evidence="1">Might take part in the signal recognition particle (SRP) pathway. This is inferred from the conservation of its genetic proximity to ftsY/ffh. May be a regulatory protein.</text>
</comment>
<comment type="similarity">
    <text evidence="1">Belongs to the UPF0122 family.</text>
</comment>
<dbReference type="EMBL" id="CP000410">
    <property type="protein sequence ID" value="ABJ53847.1"/>
    <property type="molecule type" value="Genomic_DNA"/>
</dbReference>
<dbReference type="RefSeq" id="WP_000402071.1">
    <property type="nucleotide sequence ID" value="NZ_JAMLJR010000006.1"/>
</dbReference>
<dbReference type="SMR" id="Q04K36"/>
<dbReference type="PaxDb" id="373153-SPD_1143"/>
<dbReference type="KEGG" id="spd:SPD_1143"/>
<dbReference type="eggNOG" id="COG2739">
    <property type="taxonomic scope" value="Bacteria"/>
</dbReference>
<dbReference type="HOGENOM" id="CLU_129218_1_0_9"/>
<dbReference type="BioCyc" id="SPNE373153:G1G6V-1235-MONOMER"/>
<dbReference type="Proteomes" id="UP000001452">
    <property type="component" value="Chromosome"/>
</dbReference>
<dbReference type="Gene3D" id="1.10.10.10">
    <property type="entry name" value="Winged helix-like DNA-binding domain superfamily/Winged helix DNA-binding domain"/>
    <property type="match status" value="1"/>
</dbReference>
<dbReference type="HAMAP" id="MF_00245">
    <property type="entry name" value="UPF0122"/>
    <property type="match status" value="1"/>
</dbReference>
<dbReference type="InterPro" id="IPR013324">
    <property type="entry name" value="RNA_pol_sigma_r3/r4-like"/>
</dbReference>
<dbReference type="InterPro" id="IPR007394">
    <property type="entry name" value="UPF0122"/>
</dbReference>
<dbReference type="InterPro" id="IPR054831">
    <property type="entry name" value="UPF0122_fam_protein"/>
</dbReference>
<dbReference type="InterPro" id="IPR036388">
    <property type="entry name" value="WH-like_DNA-bd_sf"/>
</dbReference>
<dbReference type="NCBIfam" id="NF001066">
    <property type="entry name" value="PRK00118.1-1"/>
    <property type="match status" value="1"/>
</dbReference>
<dbReference type="NCBIfam" id="NF001068">
    <property type="entry name" value="PRK00118.1-4"/>
    <property type="match status" value="1"/>
</dbReference>
<dbReference type="NCBIfam" id="NF001070">
    <property type="entry name" value="PRK00118.1-6"/>
    <property type="match status" value="1"/>
</dbReference>
<dbReference type="NCBIfam" id="NF045758">
    <property type="entry name" value="YlxM"/>
    <property type="match status" value="1"/>
</dbReference>
<dbReference type="PANTHER" id="PTHR40083">
    <property type="entry name" value="UPF0122 PROTEIN CBO2450/CLC_2298"/>
    <property type="match status" value="1"/>
</dbReference>
<dbReference type="PANTHER" id="PTHR40083:SF1">
    <property type="entry name" value="UPF0122 PROTEIN YLXM"/>
    <property type="match status" value="1"/>
</dbReference>
<dbReference type="Pfam" id="PF04297">
    <property type="entry name" value="UPF0122"/>
    <property type="match status" value="1"/>
</dbReference>
<dbReference type="SUPFAM" id="SSF88659">
    <property type="entry name" value="Sigma3 and sigma4 domains of RNA polymerase sigma factors"/>
    <property type="match status" value="1"/>
</dbReference>
<gene>
    <name type="ordered locus">SPD_1143</name>
</gene>
<evidence type="ECO:0000255" key="1">
    <source>
        <dbReference type="HAMAP-Rule" id="MF_00245"/>
    </source>
</evidence>
<accession>Q04K36</accession>
<sequence length="110" mass="13347">MEIEKTNRMNALFEFYAALLTDKQMNYIELYYADDYSLAEIAEEFGVSRQAVYDNIKRTEKILEDYEMKLHMYSDYIVRSQIFDQILERYPKDNFLQEQIEILTSIDNRE</sequence>
<proteinExistence type="inferred from homology"/>
<protein>
    <recommendedName>
        <fullName evidence="1">UPF0122 protein SPD_1143</fullName>
    </recommendedName>
</protein>
<reference key="1">
    <citation type="journal article" date="2007" name="J. Bacteriol.">
        <title>Genome sequence of Avery's virulent serotype 2 strain D39 of Streptococcus pneumoniae and comparison with that of unencapsulated laboratory strain R6.</title>
        <authorList>
            <person name="Lanie J.A."/>
            <person name="Ng W.-L."/>
            <person name="Kazmierczak K.M."/>
            <person name="Andrzejewski T.M."/>
            <person name="Davidsen T.M."/>
            <person name="Wayne K.J."/>
            <person name="Tettelin H."/>
            <person name="Glass J.I."/>
            <person name="Winkler M.E."/>
        </authorList>
    </citation>
    <scope>NUCLEOTIDE SEQUENCE [LARGE SCALE GENOMIC DNA]</scope>
    <source>
        <strain>D39 / NCTC 7466</strain>
    </source>
</reference>